<reference key="1">
    <citation type="journal article" date="2005" name="Science">
        <title>The transcriptional landscape of the mammalian genome.</title>
        <authorList>
            <person name="Carninci P."/>
            <person name="Kasukawa T."/>
            <person name="Katayama S."/>
            <person name="Gough J."/>
            <person name="Frith M.C."/>
            <person name="Maeda N."/>
            <person name="Oyama R."/>
            <person name="Ravasi T."/>
            <person name="Lenhard B."/>
            <person name="Wells C."/>
            <person name="Kodzius R."/>
            <person name="Shimokawa K."/>
            <person name="Bajic V.B."/>
            <person name="Brenner S.E."/>
            <person name="Batalov S."/>
            <person name="Forrest A.R."/>
            <person name="Zavolan M."/>
            <person name="Davis M.J."/>
            <person name="Wilming L.G."/>
            <person name="Aidinis V."/>
            <person name="Allen J.E."/>
            <person name="Ambesi-Impiombato A."/>
            <person name="Apweiler R."/>
            <person name="Aturaliya R.N."/>
            <person name="Bailey T.L."/>
            <person name="Bansal M."/>
            <person name="Baxter L."/>
            <person name="Beisel K.W."/>
            <person name="Bersano T."/>
            <person name="Bono H."/>
            <person name="Chalk A.M."/>
            <person name="Chiu K.P."/>
            <person name="Choudhary V."/>
            <person name="Christoffels A."/>
            <person name="Clutterbuck D.R."/>
            <person name="Crowe M.L."/>
            <person name="Dalla E."/>
            <person name="Dalrymple B.P."/>
            <person name="de Bono B."/>
            <person name="Della Gatta G."/>
            <person name="di Bernardo D."/>
            <person name="Down T."/>
            <person name="Engstrom P."/>
            <person name="Fagiolini M."/>
            <person name="Faulkner G."/>
            <person name="Fletcher C.F."/>
            <person name="Fukushima T."/>
            <person name="Furuno M."/>
            <person name="Futaki S."/>
            <person name="Gariboldi M."/>
            <person name="Georgii-Hemming P."/>
            <person name="Gingeras T.R."/>
            <person name="Gojobori T."/>
            <person name="Green R.E."/>
            <person name="Gustincich S."/>
            <person name="Harbers M."/>
            <person name="Hayashi Y."/>
            <person name="Hensch T.K."/>
            <person name="Hirokawa N."/>
            <person name="Hill D."/>
            <person name="Huminiecki L."/>
            <person name="Iacono M."/>
            <person name="Ikeo K."/>
            <person name="Iwama A."/>
            <person name="Ishikawa T."/>
            <person name="Jakt M."/>
            <person name="Kanapin A."/>
            <person name="Katoh M."/>
            <person name="Kawasawa Y."/>
            <person name="Kelso J."/>
            <person name="Kitamura H."/>
            <person name="Kitano H."/>
            <person name="Kollias G."/>
            <person name="Krishnan S.P."/>
            <person name="Kruger A."/>
            <person name="Kummerfeld S.K."/>
            <person name="Kurochkin I.V."/>
            <person name="Lareau L.F."/>
            <person name="Lazarevic D."/>
            <person name="Lipovich L."/>
            <person name="Liu J."/>
            <person name="Liuni S."/>
            <person name="McWilliam S."/>
            <person name="Madan Babu M."/>
            <person name="Madera M."/>
            <person name="Marchionni L."/>
            <person name="Matsuda H."/>
            <person name="Matsuzawa S."/>
            <person name="Miki H."/>
            <person name="Mignone F."/>
            <person name="Miyake S."/>
            <person name="Morris K."/>
            <person name="Mottagui-Tabar S."/>
            <person name="Mulder N."/>
            <person name="Nakano N."/>
            <person name="Nakauchi H."/>
            <person name="Ng P."/>
            <person name="Nilsson R."/>
            <person name="Nishiguchi S."/>
            <person name="Nishikawa S."/>
            <person name="Nori F."/>
            <person name="Ohara O."/>
            <person name="Okazaki Y."/>
            <person name="Orlando V."/>
            <person name="Pang K.C."/>
            <person name="Pavan W.J."/>
            <person name="Pavesi G."/>
            <person name="Pesole G."/>
            <person name="Petrovsky N."/>
            <person name="Piazza S."/>
            <person name="Reed J."/>
            <person name="Reid J.F."/>
            <person name="Ring B.Z."/>
            <person name="Ringwald M."/>
            <person name="Rost B."/>
            <person name="Ruan Y."/>
            <person name="Salzberg S.L."/>
            <person name="Sandelin A."/>
            <person name="Schneider C."/>
            <person name="Schoenbach C."/>
            <person name="Sekiguchi K."/>
            <person name="Semple C.A."/>
            <person name="Seno S."/>
            <person name="Sessa L."/>
            <person name="Sheng Y."/>
            <person name="Shibata Y."/>
            <person name="Shimada H."/>
            <person name="Shimada K."/>
            <person name="Silva D."/>
            <person name="Sinclair B."/>
            <person name="Sperling S."/>
            <person name="Stupka E."/>
            <person name="Sugiura K."/>
            <person name="Sultana R."/>
            <person name="Takenaka Y."/>
            <person name="Taki K."/>
            <person name="Tammoja K."/>
            <person name="Tan S.L."/>
            <person name="Tang S."/>
            <person name="Taylor M.S."/>
            <person name="Tegner J."/>
            <person name="Teichmann S.A."/>
            <person name="Ueda H.R."/>
            <person name="van Nimwegen E."/>
            <person name="Verardo R."/>
            <person name="Wei C.L."/>
            <person name="Yagi K."/>
            <person name="Yamanishi H."/>
            <person name="Zabarovsky E."/>
            <person name="Zhu S."/>
            <person name="Zimmer A."/>
            <person name="Hide W."/>
            <person name="Bult C."/>
            <person name="Grimmond S.M."/>
            <person name="Teasdale R.D."/>
            <person name="Liu E.T."/>
            <person name="Brusic V."/>
            <person name="Quackenbush J."/>
            <person name="Wahlestedt C."/>
            <person name="Mattick J.S."/>
            <person name="Hume D.A."/>
            <person name="Kai C."/>
            <person name="Sasaki D."/>
            <person name="Tomaru Y."/>
            <person name="Fukuda S."/>
            <person name="Kanamori-Katayama M."/>
            <person name="Suzuki M."/>
            <person name="Aoki J."/>
            <person name="Arakawa T."/>
            <person name="Iida J."/>
            <person name="Imamura K."/>
            <person name="Itoh M."/>
            <person name="Kato T."/>
            <person name="Kawaji H."/>
            <person name="Kawagashira N."/>
            <person name="Kawashima T."/>
            <person name="Kojima M."/>
            <person name="Kondo S."/>
            <person name="Konno H."/>
            <person name="Nakano K."/>
            <person name="Ninomiya N."/>
            <person name="Nishio T."/>
            <person name="Okada M."/>
            <person name="Plessy C."/>
            <person name="Shibata K."/>
            <person name="Shiraki T."/>
            <person name="Suzuki S."/>
            <person name="Tagami M."/>
            <person name="Waki K."/>
            <person name="Watahiki A."/>
            <person name="Okamura-Oho Y."/>
            <person name="Suzuki H."/>
            <person name="Kawai J."/>
            <person name="Hayashizaki Y."/>
        </authorList>
    </citation>
    <scope>NUCLEOTIDE SEQUENCE [LARGE SCALE MRNA] (ISOFORM 2)</scope>
    <source>
        <strain>C57BL/6J</strain>
        <tissue>Embryo</tissue>
    </source>
</reference>
<reference key="2">
    <citation type="journal article" date="2009" name="PLoS Biol.">
        <title>Lineage-specific biology revealed by a finished genome assembly of the mouse.</title>
        <authorList>
            <person name="Church D.M."/>
            <person name="Goodstadt L."/>
            <person name="Hillier L.W."/>
            <person name="Zody M.C."/>
            <person name="Goldstein S."/>
            <person name="She X."/>
            <person name="Bult C.J."/>
            <person name="Agarwala R."/>
            <person name="Cherry J.L."/>
            <person name="DiCuccio M."/>
            <person name="Hlavina W."/>
            <person name="Kapustin Y."/>
            <person name="Meric P."/>
            <person name="Maglott D."/>
            <person name="Birtle Z."/>
            <person name="Marques A.C."/>
            <person name="Graves T."/>
            <person name="Zhou S."/>
            <person name="Teague B."/>
            <person name="Potamousis K."/>
            <person name="Churas C."/>
            <person name="Place M."/>
            <person name="Herschleb J."/>
            <person name="Runnheim R."/>
            <person name="Forrest D."/>
            <person name="Amos-Landgraf J."/>
            <person name="Schwartz D.C."/>
            <person name="Cheng Z."/>
            <person name="Lindblad-Toh K."/>
            <person name="Eichler E.E."/>
            <person name="Ponting C.P."/>
        </authorList>
    </citation>
    <scope>NUCLEOTIDE SEQUENCE [LARGE SCALE GENOMIC DNA]</scope>
    <source>
        <strain>C57BL/6J</strain>
    </source>
</reference>
<reference key="3">
    <citation type="journal article" date="2004" name="Genome Res.">
        <title>The status, quality, and expansion of the NIH full-length cDNA project: the Mammalian Gene Collection (MGC).</title>
        <authorList>
            <consortium name="The MGC Project Team"/>
        </authorList>
    </citation>
    <scope>NUCLEOTIDE SEQUENCE [LARGE SCALE MRNA] (ISOFORM 1)</scope>
    <source>
        <strain>FVB/N</strain>
        <tissue>Liver</tissue>
        <tissue>Salivary gland</tissue>
    </source>
</reference>
<organism>
    <name type="scientific">Mus musculus</name>
    <name type="common">Mouse</name>
    <dbReference type="NCBI Taxonomy" id="10090"/>
    <lineage>
        <taxon>Eukaryota</taxon>
        <taxon>Metazoa</taxon>
        <taxon>Chordata</taxon>
        <taxon>Craniata</taxon>
        <taxon>Vertebrata</taxon>
        <taxon>Euteleostomi</taxon>
        <taxon>Mammalia</taxon>
        <taxon>Eutheria</taxon>
        <taxon>Euarchontoglires</taxon>
        <taxon>Glires</taxon>
        <taxon>Rodentia</taxon>
        <taxon>Myomorpha</taxon>
        <taxon>Muroidea</taxon>
        <taxon>Muridae</taxon>
        <taxon>Murinae</taxon>
        <taxon>Mus</taxon>
        <taxon>Mus</taxon>
    </lineage>
</organism>
<gene>
    <name type="primary">Miip</name>
    <name type="synonym">D4Wsu114e</name>
    <name type="synonym">Iip45</name>
</gene>
<evidence type="ECO:0000250" key="1"/>
<evidence type="ECO:0000250" key="2">
    <source>
        <dbReference type="UniProtKB" id="Q5JXC2"/>
    </source>
</evidence>
<evidence type="ECO:0000256" key="3">
    <source>
        <dbReference type="SAM" id="MobiDB-lite"/>
    </source>
</evidence>
<evidence type="ECO:0000303" key="4">
    <source>
    </source>
</evidence>
<evidence type="ECO:0000305" key="5"/>
<dbReference type="EMBL" id="AK133976">
    <property type="protein sequence ID" value="BAE21965.1"/>
    <property type="molecule type" value="mRNA"/>
</dbReference>
<dbReference type="EMBL" id="AL607066">
    <property type="status" value="NOT_ANNOTATED_CDS"/>
    <property type="molecule type" value="Genomic_DNA"/>
</dbReference>
<dbReference type="EMBL" id="BC017525">
    <property type="protein sequence ID" value="AAH17525.1"/>
    <property type="status" value="ALT_SEQ"/>
    <property type="molecule type" value="mRNA"/>
</dbReference>
<dbReference type="EMBL" id="BC024069">
    <property type="protein sequence ID" value="AAH24069.1"/>
    <property type="status" value="ALT_INIT"/>
    <property type="molecule type" value="mRNA"/>
</dbReference>
<dbReference type="CCDS" id="CCDS18923.2">
    <molecule id="A2A7Y5-1"/>
</dbReference>
<dbReference type="CCDS" id="CCDS89855.1">
    <molecule id="A2A7Y5-2"/>
</dbReference>
<dbReference type="RefSeq" id="NP_001020536.2">
    <molecule id="A2A7Y5-1"/>
    <property type="nucleotide sequence ID" value="NM_001025365.2"/>
</dbReference>
<dbReference type="RefSeq" id="NP_001361633.1">
    <molecule id="A2A7Y5-2"/>
    <property type="nucleotide sequence ID" value="NM_001374704.1"/>
</dbReference>
<dbReference type="RefSeq" id="XP_006539013.1">
    <property type="nucleotide sequence ID" value="XM_006538950.3"/>
</dbReference>
<dbReference type="RefSeq" id="XP_036020068.1">
    <molecule id="A2A7Y5-2"/>
    <property type="nucleotide sequence ID" value="XM_036164175.1"/>
</dbReference>
<dbReference type="RefSeq" id="XP_036020069.1">
    <molecule id="A2A7Y5-1"/>
    <property type="nucleotide sequence ID" value="XM_036164176.1"/>
</dbReference>
<dbReference type="BioGRID" id="205712">
    <property type="interactions" value="1"/>
</dbReference>
<dbReference type="FunCoup" id="A2A7Y5">
    <property type="interactions" value="34"/>
</dbReference>
<dbReference type="STRING" id="10090.ENSMUSP00000030886"/>
<dbReference type="iPTMnet" id="A2A7Y5"/>
<dbReference type="PhosphoSitePlus" id="A2A7Y5"/>
<dbReference type="jPOST" id="A2A7Y5"/>
<dbReference type="PaxDb" id="10090-ENSMUSP00000030886"/>
<dbReference type="ProteomicsDB" id="295911">
    <molecule id="A2A7Y5-1"/>
</dbReference>
<dbReference type="ProteomicsDB" id="295912">
    <molecule id="A2A7Y5-2"/>
</dbReference>
<dbReference type="Antibodypedia" id="28442">
    <property type="antibodies" value="106 antibodies from 21 providers"/>
</dbReference>
<dbReference type="DNASU" id="28010"/>
<dbReference type="Ensembl" id="ENSMUST00000030886.15">
    <molecule id="A2A7Y5-1"/>
    <property type="protein sequence ID" value="ENSMUSP00000030886.9"/>
    <property type="gene ID" value="ENSMUSG00000029022.19"/>
</dbReference>
<dbReference type="Ensembl" id="ENSMUST00000119975.3">
    <molecule id="A2A7Y5-2"/>
    <property type="protein sequence ID" value="ENSMUSP00000113897.3"/>
    <property type="gene ID" value="ENSMUSG00000029022.19"/>
</dbReference>
<dbReference type="Ensembl" id="ENSMUST00000172710.8">
    <molecule id="A2A7Y5-1"/>
    <property type="protein sequence ID" value="ENSMUSP00000134085.2"/>
    <property type="gene ID" value="ENSMUSG00000029022.19"/>
</dbReference>
<dbReference type="GeneID" id="28010"/>
<dbReference type="KEGG" id="mmu:28010"/>
<dbReference type="UCSC" id="uc008vtd.2">
    <molecule id="A2A7Y5-1"/>
    <property type="organism name" value="mouse"/>
</dbReference>
<dbReference type="UCSC" id="uc008vte.2">
    <molecule id="A2A7Y5-2"/>
    <property type="organism name" value="mouse"/>
</dbReference>
<dbReference type="AGR" id="MGI:106506"/>
<dbReference type="CTD" id="60672"/>
<dbReference type="MGI" id="MGI:106506">
    <property type="gene designation" value="Miip"/>
</dbReference>
<dbReference type="VEuPathDB" id="HostDB:ENSMUSG00000029022"/>
<dbReference type="eggNOG" id="ENOG502RZQ8">
    <property type="taxonomic scope" value="Eukaryota"/>
</dbReference>
<dbReference type="GeneTree" id="ENSGT00390000003768"/>
<dbReference type="HOGENOM" id="CLU_061576_0_0_1"/>
<dbReference type="InParanoid" id="A2A7Y5"/>
<dbReference type="OMA" id="PTPIWSV"/>
<dbReference type="PhylomeDB" id="A2A7Y5"/>
<dbReference type="TreeFam" id="TF335829"/>
<dbReference type="BioGRID-ORCS" id="28010">
    <property type="hits" value="6 hits in 81 CRISPR screens"/>
</dbReference>
<dbReference type="PRO" id="PR:A2A7Y5"/>
<dbReference type="Proteomes" id="UP000000589">
    <property type="component" value="Chromosome 4"/>
</dbReference>
<dbReference type="RNAct" id="A2A7Y5">
    <property type="molecule type" value="protein"/>
</dbReference>
<dbReference type="Bgee" id="ENSMUSG00000029022">
    <property type="expression patterns" value="Expressed in granulocyte and 205 other cell types or tissues"/>
</dbReference>
<dbReference type="ExpressionAtlas" id="A2A7Y5">
    <property type="expression patterns" value="baseline and differential"/>
</dbReference>
<dbReference type="GO" id="GO:0030336">
    <property type="term" value="P:negative regulation of cell migration"/>
    <property type="evidence" value="ECO:0007669"/>
    <property type="project" value="InterPro"/>
</dbReference>
<dbReference type="GO" id="GO:0010972">
    <property type="term" value="P:negative regulation of G2/M transition of mitotic cell cycle"/>
    <property type="evidence" value="ECO:0007669"/>
    <property type="project" value="InterPro"/>
</dbReference>
<dbReference type="InterPro" id="IPR031466">
    <property type="entry name" value="MIIP"/>
</dbReference>
<dbReference type="PANTHER" id="PTHR34831">
    <property type="entry name" value="MIGRATION AND INVASION-INHIBITORY PROTEIN"/>
    <property type="match status" value="1"/>
</dbReference>
<dbReference type="PANTHER" id="PTHR34831:SF1">
    <property type="entry name" value="MIGRATION AND INVASION-INHIBITORY PROTEIN"/>
    <property type="match status" value="1"/>
</dbReference>
<dbReference type="Pfam" id="PF15734">
    <property type="entry name" value="MIIP"/>
    <property type="match status" value="1"/>
</dbReference>
<proteinExistence type="evidence at transcript level"/>
<comment type="function">
    <text evidence="1">Inhibits glioma cells invasion and down-regulates adhesion- and motility-associated genes such as NFKB2 and ICAM1. Exhibits opposing effects to IGFBP2 on cell invasion (By similarity).</text>
</comment>
<comment type="subunit">
    <text evidence="1">Interacts with IGFBP2.</text>
</comment>
<comment type="alternative products">
    <event type="alternative splicing"/>
    <isoform>
        <id>A2A7Y5-1</id>
        <name>1</name>
        <sequence type="displayed"/>
    </isoform>
    <isoform>
        <id>A2A7Y5-2</id>
        <name>2</name>
        <sequence type="described" ref="VSP_032215"/>
    </isoform>
</comment>
<comment type="caution">
    <text evidence="5">It is uncertain whether Met-1 or Met-4 is the initiator.</text>
</comment>
<comment type="sequence caution" evidence="5">
    <conflict type="erroneous initiation">
        <sequence resource="EMBL-CDS" id="AAH17525"/>
    </conflict>
    <text>Truncated N-terminus.</text>
</comment>
<comment type="sequence caution" evidence="5">
    <conflict type="miscellaneous discrepancy">
        <sequence resource="EMBL-CDS" id="AAH17525"/>
    </conflict>
    <text>Intron retention.</text>
</comment>
<comment type="sequence caution" evidence="5">
    <conflict type="erroneous initiation">
        <sequence resource="EMBL-CDS" id="AAH24069"/>
    </conflict>
    <text>Truncated N-terminus.</text>
</comment>
<keyword id="KW-0025">Alternative splicing</keyword>
<keyword id="KW-0597">Phosphoprotein</keyword>
<keyword id="KW-1185">Reference proteome</keyword>
<accession>A2A7Y5</accession>
<accession>Q3UZ92</accession>
<accession>Q8CFZ8</accession>
<accession>Q8VD71</accession>
<protein>
    <recommendedName>
        <fullName>Migration and invasion-inhibitory protein</fullName>
    </recommendedName>
    <alternativeName>
        <fullName>Invasion-inhibitory protein 45</fullName>
        <shortName>IIp45</shortName>
    </alternativeName>
</protein>
<feature type="chain" id="PRO_0000324323" description="Migration and invasion-inhibitory protein">
    <location>
        <begin position="1"/>
        <end position="387"/>
    </location>
</feature>
<feature type="region of interest" description="Disordered" evidence="3">
    <location>
        <begin position="50"/>
        <end position="80"/>
    </location>
</feature>
<feature type="region of interest" description="Disordered" evidence="3">
    <location>
        <begin position="133"/>
        <end position="172"/>
    </location>
</feature>
<feature type="compositionally biased region" description="Polar residues" evidence="3">
    <location>
        <begin position="50"/>
        <end position="59"/>
    </location>
</feature>
<feature type="compositionally biased region" description="Low complexity" evidence="3">
    <location>
        <begin position="60"/>
        <end position="69"/>
    </location>
</feature>
<feature type="compositionally biased region" description="Basic and acidic residues" evidence="3">
    <location>
        <begin position="70"/>
        <end position="80"/>
    </location>
</feature>
<feature type="modified residue" description="Phosphoserine" evidence="2">
    <location>
        <position position="307"/>
    </location>
</feature>
<feature type="splice variant" id="VSP_032215" description="In isoform 2." evidence="4">
    <original>ALPAQVTPPLWSEPQVAQLCPSH</original>
    <variation>KPRGQTAQKTTVFYQCQQPPLRRSP</variation>
    <location>
        <begin position="365"/>
        <end position="387"/>
    </location>
</feature>
<name>MIIP_MOUSE</name>
<sequence>MPNMAETKDPVRLRLLSLELLKQLWAGHEAMCRSVVRAASGSNLDCSSNNLEMPLSQETSSASSVAPSSQDKRHMLDPLDSRRDDTFDVAWYVKFNSRMDSFLPATGQHQEPQEELRPPSVPLLATQGLKGPVSLGGPKGLGPDKTQVPRSILSRLSKPSKPRVTSQESAVPESSWHSRPYLGYDWIAGSLDNSSPVTSEPEAFFSMLQRFRENNKEDCVCNSPEAVFPGLQESSGVEEDHECMYCYRINRRLFPEPVDPGAPCRLCGIPRDEKGPGTLVEPVQVRVSIPLSIMDPPHQYRIHRRKSFDASDTLALPRHCLLGWDILPPKSEKTSVPKSLDLWSSVSYGAGQRRDLSATSPPCQALPAQVTPPLWSEPQVAQLCPSH</sequence>